<sequence length="259" mass="30554">MLPTSSPQIHRNGSLSERDAARHTAGAKRYKYLRRLLHFRQMDFEFAVWQMLYLFTSPQKVYRNFHYRKQTKDQWARDDPAFLVLLSIWLCVSTVGFGLVLDMGFVETLTLLLWVVFIDCIGVGLLISTLMWFVTNKYLMKHPNRDYDVEWGYAFDVHLNAFYPLLVILHFLQLFFINHVVVISSDWFLGYFVGNTMWLIAIGYYVYITFLGYSALPFLKNTVVLLYPFALLGLLYVLSISLGWNFTKGLCWFYKHRVQ</sequence>
<dbReference type="EMBL" id="BC047831">
    <property type="protein sequence ID" value="AAH47831.1"/>
    <property type="molecule type" value="mRNA"/>
</dbReference>
<dbReference type="RefSeq" id="NP_956541.1">
    <property type="nucleotide sequence ID" value="NM_200247.1"/>
</dbReference>
<dbReference type="FunCoup" id="Q7ZUU1">
    <property type="interactions" value="3174"/>
</dbReference>
<dbReference type="STRING" id="7955.ENSDARP00000059211"/>
<dbReference type="PaxDb" id="7955-ENSDARP00000059211"/>
<dbReference type="GeneID" id="393217"/>
<dbReference type="KEGG" id="dre:393217"/>
<dbReference type="AGR" id="ZFIN:ZDB-GENE-040426-907"/>
<dbReference type="CTD" id="25972"/>
<dbReference type="ZFIN" id="ZDB-GENE-040426-907">
    <property type="gene designation" value="unc50"/>
</dbReference>
<dbReference type="eggNOG" id="KOG3012">
    <property type="taxonomic scope" value="Eukaryota"/>
</dbReference>
<dbReference type="InParanoid" id="Q7ZUU1"/>
<dbReference type="OrthoDB" id="10027013at2759"/>
<dbReference type="PhylomeDB" id="Q7ZUU1"/>
<dbReference type="PRO" id="PR:Q7ZUU1"/>
<dbReference type="Proteomes" id="UP000000437">
    <property type="component" value="Chromosome 6"/>
</dbReference>
<dbReference type="GO" id="GO:0000139">
    <property type="term" value="C:Golgi membrane"/>
    <property type="evidence" value="ECO:0000318"/>
    <property type="project" value="GO_Central"/>
</dbReference>
<dbReference type="GO" id="GO:0005637">
    <property type="term" value="C:nuclear inner membrane"/>
    <property type="evidence" value="ECO:0000250"/>
    <property type="project" value="UniProtKB"/>
</dbReference>
<dbReference type="GO" id="GO:0003723">
    <property type="term" value="F:RNA binding"/>
    <property type="evidence" value="ECO:0000250"/>
    <property type="project" value="UniProtKB"/>
</dbReference>
<dbReference type="GO" id="GO:0034394">
    <property type="term" value="P:protein localization to cell surface"/>
    <property type="evidence" value="ECO:0000250"/>
    <property type="project" value="UniProtKB"/>
</dbReference>
<dbReference type="InterPro" id="IPR007881">
    <property type="entry name" value="UNC-50"/>
</dbReference>
<dbReference type="PANTHER" id="PTHR12841">
    <property type="entry name" value="PROTEIN UNC-50 HOMOLOG"/>
    <property type="match status" value="1"/>
</dbReference>
<dbReference type="PANTHER" id="PTHR12841:SF6">
    <property type="entry name" value="PROTEIN UNC-50 HOMOLOG"/>
    <property type="match status" value="1"/>
</dbReference>
<dbReference type="Pfam" id="PF05216">
    <property type="entry name" value="UNC-50"/>
    <property type="match status" value="1"/>
</dbReference>
<name>UNC50_DANRE</name>
<organism>
    <name type="scientific">Danio rerio</name>
    <name type="common">Zebrafish</name>
    <name type="synonym">Brachydanio rerio</name>
    <dbReference type="NCBI Taxonomy" id="7955"/>
    <lineage>
        <taxon>Eukaryota</taxon>
        <taxon>Metazoa</taxon>
        <taxon>Chordata</taxon>
        <taxon>Craniata</taxon>
        <taxon>Vertebrata</taxon>
        <taxon>Euteleostomi</taxon>
        <taxon>Actinopterygii</taxon>
        <taxon>Neopterygii</taxon>
        <taxon>Teleostei</taxon>
        <taxon>Ostariophysi</taxon>
        <taxon>Cypriniformes</taxon>
        <taxon>Danionidae</taxon>
        <taxon>Danioninae</taxon>
        <taxon>Danio</taxon>
    </lineage>
</organism>
<protein>
    <recommendedName>
        <fullName>Protein unc-50 homolog</fullName>
    </recommendedName>
</protein>
<accession>Q7ZUU1</accession>
<keyword id="KW-0333">Golgi apparatus</keyword>
<keyword id="KW-0472">Membrane</keyword>
<keyword id="KW-0539">Nucleus</keyword>
<keyword id="KW-1185">Reference proteome</keyword>
<keyword id="KW-0694">RNA-binding</keyword>
<keyword id="KW-0812">Transmembrane</keyword>
<keyword id="KW-1133">Transmembrane helix</keyword>
<comment type="function">
    <text evidence="1">Involved in the cell surface expression of neuronal nicotinic receptors (By similarity). Binds RNA (By similarity).</text>
</comment>
<comment type="subcellular location">
    <subcellularLocation>
        <location evidence="1">Nucleus inner membrane</location>
        <topology evidence="1">Multi-pass membrane protein</topology>
    </subcellularLocation>
    <subcellularLocation>
        <location evidence="2">Golgi apparatus membrane</location>
        <topology evidence="2">Multi-pass membrane protein</topology>
    </subcellularLocation>
</comment>
<comment type="similarity">
    <text evidence="5">Belongs to the unc-50 family.</text>
</comment>
<evidence type="ECO:0000250" key="1">
    <source>
        <dbReference type="UniProtKB" id="O55227"/>
    </source>
</evidence>
<evidence type="ECO:0000250" key="2">
    <source>
        <dbReference type="UniProtKB" id="Q53HI1"/>
    </source>
</evidence>
<evidence type="ECO:0000255" key="3"/>
<evidence type="ECO:0000256" key="4">
    <source>
        <dbReference type="SAM" id="MobiDB-lite"/>
    </source>
</evidence>
<evidence type="ECO:0000305" key="5"/>
<gene>
    <name type="primary">unc50</name>
</gene>
<proteinExistence type="evidence at transcript level"/>
<reference key="1">
    <citation type="submission" date="2003-03" db="EMBL/GenBank/DDBJ databases">
        <authorList>
            <consortium name="NIH - Zebrafish Gene Collection (ZGC) project"/>
        </authorList>
    </citation>
    <scope>NUCLEOTIDE SEQUENCE [LARGE SCALE MRNA]</scope>
</reference>
<feature type="chain" id="PRO_0000308964" description="Protein unc-50 homolog">
    <location>
        <begin position="1"/>
        <end position="259"/>
    </location>
</feature>
<feature type="topological domain" description="Cytoplasmic" evidence="3">
    <location>
        <begin position="1"/>
        <end position="80"/>
    </location>
</feature>
<feature type="transmembrane region" description="Helical" evidence="3">
    <location>
        <begin position="81"/>
        <end position="101"/>
    </location>
</feature>
<feature type="topological domain" description="Lumenal" evidence="3">
    <location>
        <begin position="102"/>
        <end position="110"/>
    </location>
</feature>
<feature type="transmembrane region" description="Helical" evidence="3">
    <location>
        <begin position="111"/>
        <end position="131"/>
    </location>
</feature>
<feature type="topological domain" description="Cytoplasmic" evidence="3">
    <location>
        <begin position="132"/>
        <end position="162"/>
    </location>
</feature>
<feature type="transmembrane region" description="Helical" evidence="3">
    <location>
        <begin position="163"/>
        <end position="183"/>
    </location>
</feature>
<feature type="topological domain" description="Lumenal" evidence="3">
    <location>
        <begin position="184"/>
        <end position="198"/>
    </location>
</feature>
<feature type="transmembrane region" description="Helical" evidence="3">
    <location>
        <begin position="199"/>
        <end position="219"/>
    </location>
</feature>
<feature type="topological domain" description="Cytoplasmic" evidence="3">
    <location>
        <begin position="220"/>
        <end position="222"/>
    </location>
</feature>
<feature type="transmembrane region" description="Helical" evidence="3">
    <location>
        <begin position="223"/>
        <end position="243"/>
    </location>
</feature>
<feature type="topological domain" description="Lumenal" evidence="3">
    <location>
        <begin position="244"/>
        <end position="259"/>
    </location>
</feature>
<feature type="region of interest" description="Disordered" evidence="4">
    <location>
        <begin position="1"/>
        <end position="22"/>
    </location>
</feature>
<feature type="compositionally biased region" description="Polar residues" evidence="4">
    <location>
        <begin position="1"/>
        <end position="15"/>
    </location>
</feature>